<feature type="chain" id="PRO_0000226257" description="Leucine-rich repeat-containing protein 40">
    <location>
        <begin position="1"/>
        <end position="602"/>
    </location>
</feature>
<feature type="repeat" description="LRR 1">
    <location>
        <begin position="83"/>
        <end position="104"/>
    </location>
</feature>
<feature type="repeat" description="LRR 2">
    <location>
        <begin position="106"/>
        <end position="127"/>
    </location>
</feature>
<feature type="repeat" description="LRR 3">
    <location>
        <begin position="129"/>
        <end position="150"/>
    </location>
</feature>
<feature type="repeat" description="LRR 4">
    <location>
        <begin position="152"/>
        <end position="173"/>
    </location>
</feature>
<feature type="repeat" description="LRR 5">
    <location>
        <begin position="175"/>
        <end position="196"/>
    </location>
</feature>
<feature type="repeat" description="LRR 6">
    <location>
        <begin position="198"/>
        <end position="219"/>
    </location>
</feature>
<feature type="repeat" description="LRR 7">
    <location>
        <begin position="221"/>
        <end position="242"/>
    </location>
</feature>
<feature type="repeat" description="LRR 8">
    <location>
        <begin position="244"/>
        <end position="265"/>
    </location>
</feature>
<feature type="repeat" description="LRR 9">
    <location>
        <begin position="266"/>
        <end position="286"/>
    </location>
</feature>
<feature type="repeat" description="LRR 10">
    <location>
        <begin position="290"/>
        <end position="311"/>
    </location>
</feature>
<feature type="repeat" description="LRR 11">
    <location>
        <begin position="313"/>
        <end position="335"/>
    </location>
</feature>
<feature type="repeat" description="LRR 12">
    <location>
        <begin position="336"/>
        <end position="356"/>
    </location>
</feature>
<feature type="repeat" description="LRR 13">
    <location>
        <begin position="400"/>
        <end position="421"/>
    </location>
</feature>
<feature type="repeat" description="LRR 14">
    <location>
        <begin position="426"/>
        <end position="447"/>
    </location>
</feature>
<feature type="repeat" description="LRR 15">
    <location>
        <begin position="450"/>
        <end position="472"/>
    </location>
</feature>
<feature type="repeat" description="LRR 16">
    <location>
        <begin position="473"/>
        <end position="494"/>
    </location>
</feature>
<feature type="repeat" description="LRR 17">
    <location>
        <begin position="496"/>
        <end position="517"/>
    </location>
</feature>
<feature type="repeat" description="LRR 18">
    <location>
        <begin position="519"/>
        <end position="540"/>
    </location>
</feature>
<feature type="repeat" description="LRR 19">
    <location>
        <begin position="543"/>
        <end position="564"/>
    </location>
</feature>
<feature type="repeat" description="LRR 20">
    <location>
        <begin position="566"/>
        <end position="586"/>
    </location>
</feature>
<feature type="modified residue" description="Phosphoserine" evidence="2">
    <location>
        <position position="71"/>
    </location>
</feature>
<feature type="sequence variant" id="VAR_034088" description="In dbSNP:rs270495.">
    <original>Q</original>
    <variation>P</variation>
    <location>
        <position position="53"/>
    </location>
</feature>
<feature type="sequence variant" id="VAR_034089" description="In dbSNP:rs3180401.">
    <original>I</original>
    <variation>V</variation>
    <location>
        <position position="500"/>
    </location>
</feature>
<feature type="sequence conflict" description="In Ref. 1; BAA91094." evidence="1" ref="1">
    <original>K</original>
    <variation>T</variation>
    <location>
        <position position="368"/>
    </location>
</feature>
<name>LRC40_HUMAN</name>
<accession>Q9H9A6</accession>
<accession>Q9BTR7</accession>
<accession>Q9NSK1</accession>
<accession>Q9NXC1</accession>
<dbReference type="EMBL" id="AK000338">
    <property type="protein sequence ID" value="BAA91094.1"/>
    <property type="status" value="ALT_INIT"/>
    <property type="molecule type" value="mRNA"/>
</dbReference>
<dbReference type="EMBL" id="AK022951">
    <property type="protein sequence ID" value="BAB14326.1"/>
    <property type="molecule type" value="mRNA"/>
</dbReference>
<dbReference type="EMBL" id="AL353771">
    <property type="status" value="NOT_ANNOTATED_CDS"/>
    <property type="molecule type" value="Genomic_DNA"/>
</dbReference>
<dbReference type="EMBL" id="BC003407">
    <property type="protein sequence ID" value="AAH03407.2"/>
    <property type="molecule type" value="mRNA"/>
</dbReference>
<dbReference type="EMBL" id="BC008586">
    <property type="protein sequence ID" value="AAH08586.1"/>
    <property type="molecule type" value="mRNA"/>
</dbReference>
<dbReference type="EMBL" id="AL162076">
    <property type="protein sequence ID" value="CAB82410.1"/>
    <property type="molecule type" value="mRNA"/>
</dbReference>
<dbReference type="CCDS" id="CCDS646.1"/>
<dbReference type="PIR" id="T47176">
    <property type="entry name" value="T47176"/>
</dbReference>
<dbReference type="RefSeq" id="NP_060238.3">
    <property type="nucleotide sequence ID" value="NM_017768.4"/>
</dbReference>
<dbReference type="SMR" id="Q9H9A6"/>
<dbReference type="BioGRID" id="120770">
    <property type="interactions" value="88"/>
</dbReference>
<dbReference type="FunCoup" id="Q9H9A6">
    <property type="interactions" value="1255"/>
</dbReference>
<dbReference type="IntAct" id="Q9H9A6">
    <property type="interactions" value="60"/>
</dbReference>
<dbReference type="MINT" id="Q9H9A6"/>
<dbReference type="STRING" id="9606.ENSP00000359990"/>
<dbReference type="GlyGen" id="Q9H9A6">
    <property type="glycosylation" value="2 sites, 1 N-linked glycan (1 site), 1 O-linked glycan (1 site)"/>
</dbReference>
<dbReference type="iPTMnet" id="Q9H9A6"/>
<dbReference type="PhosphoSitePlus" id="Q9H9A6"/>
<dbReference type="SwissPalm" id="Q9H9A6"/>
<dbReference type="BioMuta" id="LRRC40"/>
<dbReference type="DMDM" id="74761553"/>
<dbReference type="REPRODUCTION-2DPAGE" id="IPI00152998"/>
<dbReference type="jPOST" id="Q9H9A6"/>
<dbReference type="MassIVE" id="Q9H9A6"/>
<dbReference type="PaxDb" id="9606-ENSP00000359990"/>
<dbReference type="PeptideAtlas" id="Q9H9A6"/>
<dbReference type="ProteomicsDB" id="81305"/>
<dbReference type="Pumba" id="Q9H9A6"/>
<dbReference type="Antibodypedia" id="19653">
    <property type="antibodies" value="116 antibodies from 20 providers"/>
</dbReference>
<dbReference type="DNASU" id="55631"/>
<dbReference type="Ensembl" id="ENST00000370952.4">
    <property type="protein sequence ID" value="ENSP00000359990.3"/>
    <property type="gene ID" value="ENSG00000066557.6"/>
</dbReference>
<dbReference type="GeneID" id="55631"/>
<dbReference type="KEGG" id="hsa:55631"/>
<dbReference type="MANE-Select" id="ENST00000370952.4">
    <property type="protein sequence ID" value="ENSP00000359990.3"/>
    <property type="RefSeq nucleotide sequence ID" value="NM_017768.5"/>
    <property type="RefSeq protein sequence ID" value="NP_060238.3"/>
</dbReference>
<dbReference type="UCSC" id="uc001der.3">
    <property type="organism name" value="human"/>
</dbReference>
<dbReference type="AGR" id="HGNC:26004"/>
<dbReference type="CTD" id="55631"/>
<dbReference type="DisGeNET" id="55631"/>
<dbReference type="GeneCards" id="LRRC40"/>
<dbReference type="HGNC" id="HGNC:26004">
    <property type="gene designation" value="LRRC40"/>
</dbReference>
<dbReference type="HPA" id="ENSG00000066557">
    <property type="expression patterns" value="Low tissue specificity"/>
</dbReference>
<dbReference type="neXtProt" id="NX_Q9H9A6"/>
<dbReference type="OpenTargets" id="ENSG00000066557"/>
<dbReference type="PharmGKB" id="PA142671528"/>
<dbReference type="VEuPathDB" id="HostDB:ENSG00000066557"/>
<dbReference type="eggNOG" id="KOG0472">
    <property type="taxonomic scope" value="Eukaryota"/>
</dbReference>
<dbReference type="GeneTree" id="ENSGT00940000156968"/>
<dbReference type="HOGENOM" id="CLU_000288_18_23_1"/>
<dbReference type="InParanoid" id="Q9H9A6"/>
<dbReference type="OMA" id="CMLHKLT"/>
<dbReference type="OrthoDB" id="660555at2759"/>
<dbReference type="PAN-GO" id="Q9H9A6">
    <property type="GO annotations" value="4 GO annotations based on evolutionary models"/>
</dbReference>
<dbReference type="PhylomeDB" id="Q9H9A6"/>
<dbReference type="TreeFam" id="TF354310"/>
<dbReference type="PathwayCommons" id="Q9H9A6"/>
<dbReference type="SignaLink" id="Q9H9A6"/>
<dbReference type="BioGRID-ORCS" id="55631">
    <property type="hits" value="10 hits in 1154 CRISPR screens"/>
</dbReference>
<dbReference type="CD-CODE" id="FB4E32DD">
    <property type="entry name" value="Presynaptic clusters and postsynaptic densities"/>
</dbReference>
<dbReference type="ChiTaRS" id="LRRC40">
    <property type="organism name" value="human"/>
</dbReference>
<dbReference type="GeneWiki" id="LRRC40"/>
<dbReference type="GenomeRNAi" id="55631"/>
<dbReference type="Pharos" id="Q9H9A6">
    <property type="development level" value="Tdark"/>
</dbReference>
<dbReference type="PRO" id="PR:Q9H9A6"/>
<dbReference type="Proteomes" id="UP000005640">
    <property type="component" value="Chromosome 1"/>
</dbReference>
<dbReference type="RNAct" id="Q9H9A6">
    <property type="molecule type" value="protein"/>
</dbReference>
<dbReference type="Bgee" id="ENSG00000066557">
    <property type="expression patterns" value="Expressed in jejunal mucosa and 208 other cell types or tissues"/>
</dbReference>
<dbReference type="ExpressionAtlas" id="Q9H9A6">
    <property type="expression patterns" value="baseline and differential"/>
</dbReference>
<dbReference type="GO" id="GO:0016020">
    <property type="term" value="C:membrane"/>
    <property type="evidence" value="ECO:0007005"/>
    <property type="project" value="UniProtKB"/>
</dbReference>
<dbReference type="GO" id="GO:0035556">
    <property type="term" value="P:intracellular signal transduction"/>
    <property type="evidence" value="ECO:0000318"/>
    <property type="project" value="GO_Central"/>
</dbReference>
<dbReference type="FunFam" id="3.80.10.10:FF:000116">
    <property type="entry name" value="Leucine-rich repeat-containing protein 40"/>
    <property type="match status" value="1"/>
</dbReference>
<dbReference type="FunFam" id="3.80.10.10:FF:000193">
    <property type="entry name" value="Leucine-rich repeat-containing protein 40"/>
    <property type="match status" value="1"/>
</dbReference>
<dbReference type="FunFam" id="3.80.10.10:FF:000265">
    <property type="entry name" value="Leucine-rich repeat-containing protein 40"/>
    <property type="match status" value="1"/>
</dbReference>
<dbReference type="FunFam" id="3.80.10.10:FF:000206">
    <property type="entry name" value="leucine-rich repeat-containing protein 40"/>
    <property type="match status" value="1"/>
</dbReference>
<dbReference type="Gene3D" id="3.80.10.10">
    <property type="entry name" value="Ribonuclease Inhibitor"/>
    <property type="match status" value="4"/>
</dbReference>
<dbReference type="InterPro" id="IPR001611">
    <property type="entry name" value="Leu-rich_rpt"/>
</dbReference>
<dbReference type="InterPro" id="IPR003591">
    <property type="entry name" value="Leu-rich_rpt_typical-subtyp"/>
</dbReference>
<dbReference type="InterPro" id="IPR032675">
    <property type="entry name" value="LRR_dom_sf"/>
</dbReference>
<dbReference type="InterPro" id="IPR050333">
    <property type="entry name" value="SLRP"/>
</dbReference>
<dbReference type="PANTHER" id="PTHR45712">
    <property type="entry name" value="AGAP008170-PA"/>
    <property type="match status" value="1"/>
</dbReference>
<dbReference type="PANTHER" id="PTHR45712:SF22">
    <property type="entry name" value="INSULIN-LIKE GROWTH FACTOR-BINDING PROTEIN COMPLEX ACID LABILE SUBUNIT"/>
    <property type="match status" value="1"/>
</dbReference>
<dbReference type="Pfam" id="PF13855">
    <property type="entry name" value="LRR_8"/>
    <property type="match status" value="4"/>
</dbReference>
<dbReference type="PRINTS" id="PR00019">
    <property type="entry name" value="LEURICHRPT"/>
</dbReference>
<dbReference type="SMART" id="SM00364">
    <property type="entry name" value="LRR_BAC"/>
    <property type="match status" value="11"/>
</dbReference>
<dbReference type="SMART" id="SM00365">
    <property type="entry name" value="LRR_SD22"/>
    <property type="match status" value="5"/>
</dbReference>
<dbReference type="SMART" id="SM00369">
    <property type="entry name" value="LRR_TYP"/>
    <property type="match status" value="13"/>
</dbReference>
<dbReference type="SUPFAM" id="SSF52058">
    <property type="entry name" value="L domain-like"/>
    <property type="match status" value="2"/>
</dbReference>
<dbReference type="PROSITE" id="PS51450">
    <property type="entry name" value="LRR"/>
    <property type="match status" value="17"/>
</dbReference>
<comment type="interaction">
    <interactant intactId="EBI-1043135">
        <id>Q9H9A6</id>
    </interactant>
    <interactant intactId="EBI-12843080">
        <id>Q4LDG9</id>
        <label>DNAL1</label>
    </interactant>
    <organismsDiffer>false</organismsDiffer>
    <experiments>3</experiments>
</comment>
<comment type="interaction">
    <interactant intactId="EBI-1043135">
        <id>Q9H9A6</id>
    </interactant>
    <interactant intactId="EBI-21572584">
        <id>P07205</id>
        <label>PGK2</label>
    </interactant>
    <organismsDiffer>false</organismsDiffer>
    <experiments>2</experiments>
</comment>
<comment type="sequence caution" evidence="1">
    <conflict type="erroneous initiation">
        <sequence resource="EMBL-CDS" id="BAA91094"/>
    </conflict>
</comment>
<reference key="1">
    <citation type="journal article" date="2004" name="Nat. Genet.">
        <title>Complete sequencing and characterization of 21,243 full-length human cDNAs.</title>
        <authorList>
            <person name="Ota T."/>
            <person name="Suzuki Y."/>
            <person name="Nishikawa T."/>
            <person name="Otsuki T."/>
            <person name="Sugiyama T."/>
            <person name="Irie R."/>
            <person name="Wakamatsu A."/>
            <person name="Hayashi K."/>
            <person name="Sato H."/>
            <person name="Nagai K."/>
            <person name="Kimura K."/>
            <person name="Makita H."/>
            <person name="Sekine M."/>
            <person name="Obayashi M."/>
            <person name="Nishi T."/>
            <person name="Shibahara T."/>
            <person name="Tanaka T."/>
            <person name="Ishii S."/>
            <person name="Yamamoto J."/>
            <person name="Saito K."/>
            <person name="Kawai Y."/>
            <person name="Isono Y."/>
            <person name="Nakamura Y."/>
            <person name="Nagahari K."/>
            <person name="Murakami K."/>
            <person name="Yasuda T."/>
            <person name="Iwayanagi T."/>
            <person name="Wagatsuma M."/>
            <person name="Shiratori A."/>
            <person name="Sudo H."/>
            <person name="Hosoiri T."/>
            <person name="Kaku Y."/>
            <person name="Kodaira H."/>
            <person name="Kondo H."/>
            <person name="Sugawara M."/>
            <person name="Takahashi M."/>
            <person name="Kanda K."/>
            <person name="Yokoi T."/>
            <person name="Furuya T."/>
            <person name="Kikkawa E."/>
            <person name="Omura Y."/>
            <person name="Abe K."/>
            <person name="Kamihara K."/>
            <person name="Katsuta N."/>
            <person name="Sato K."/>
            <person name="Tanikawa M."/>
            <person name="Yamazaki M."/>
            <person name="Ninomiya K."/>
            <person name="Ishibashi T."/>
            <person name="Yamashita H."/>
            <person name="Murakawa K."/>
            <person name="Fujimori K."/>
            <person name="Tanai H."/>
            <person name="Kimata M."/>
            <person name="Watanabe M."/>
            <person name="Hiraoka S."/>
            <person name="Chiba Y."/>
            <person name="Ishida S."/>
            <person name="Ono Y."/>
            <person name="Takiguchi S."/>
            <person name="Watanabe S."/>
            <person name="Yosida M."/>
            <person name="Hotuta T."/>
            <person name="Kusano J."/>
            <person name="Kanehori K."/>
            <person name="Takahashi-Fujii A."/>
            <person name="Hara H."/>
            <person name="Tanase T.-O."/>
            <person name="Nomura Y."/>
            <person name="Togiya S."/>
            <person name="Komai F."/>
            <person name="Hara R."/>
            <person name="Takeuchi K."/>
            <person name="Arita M."/>
            <person name="Imose N."/>
            <person name="Musashino K."/>
            <person name="Yuuki H."/>
            <person name="Oshima A."/>
            <person name="Sasaki N."/>
            <person name="Aotsuka S."/>
            <person name="Yoshikawa Y."/>
            <person name="Matsunawa H."/>
            <person name="Ichihara T."/>
            <person name="Shiohata N."/>
            <person name="Sano S."/>
            <person name="Moriya S."/>
            <person name="Momiyama H."/>
            <person name="Satoh N."/>
            <person name="Takami S."/>
            <person name="Terashima Y."/>
            <person name="Suzuki O."/>
            <person name="Nakagawa S."/>
            <person name="Senoh A."/>
            <person name="Mizoguchi H."/>
            <person name="Goto Y."/>
            <person name="Shimizu F."/>
            <person name="Wakebe H."/>
            <person name="Hishigaki H."/>
            <person name="Watanabe T."/>
            <person name="Sugiyama A."/>
            <person name="Takemoto M."/>
            <person name="Kawakami B."/>
            <person name="Yamazaki M."/>
            <person name="Watanabe K."/>
            <person name="Kumagai A."/>
            <person name="Itakura S."/>
            <person name="Fukuzumi Y."/>
            <person name="Fujimori Y."/>
            <person name="Komiyama M."/>
            <person name="Tashiro H."/>
            <person name="Tanigami A."/>
            <person name="Fujiwara T."/>
            <person name="Ono T."/>
            <person name="Yamada K."/>
            <person name="Fujii Y."/>
            <person name="Ozaki K."/>
            <person name="Hirao M."/>
            <person name="Ohmori Y."/>
            <person name="Kawabata A."/>
            <person name="Hikiji T."/>
            <person name="Kobatake N."/>
            <person name="Inagaki H."/>
            <person name="Ikema Y."/>
            <person name="Okamoto S."/>
            <person name="Okitani R."/>
            <person name="Kawakami T."/>
            <person name="Noguchi S."/>
            <person name="Itoh T."/>
            <person name="Shigeta K."/>
            <person name="Senba T."/>
            <person name="Matsumura K."/>
            <person name="Nakajima Y."/>
            <person name="Mizuno T."/>
            <person name="Morinaga M."/>
            <person name="Sasaki M."/>
            <person name="Togashi T."/>
            <person name="Oyama M."/>
            <person name="Hata H."/>
            <person name="Watanabe M."/>
            <person name="Komatsu T."/>
            <person name="Mizushima-Sugano J."/>
            <person name="Satoh T."/>
            <person name="Shirai Y."/>
            <person name="Takahashi Y."/>
            <person name="Nakagawa K."/>
            <person name="Okumura K."/>
            <person name="Nagase T."/>
            <person name="Nomura N."/>
            <person name="Kikuchi H."/>
            <person name="Masuho Y."/>
            <person name="Yamashita R."/>
            <person name="Nakai K."/>
            <person name="Yada T."/>
            <person name="Nakamura Y."/>
            <person name="Ohara O."/>
            <person name="Isogai T."/>
            <person name="Sugano S."/>
        </authorList>
    </citation>
    <scope>NUCLEOTIDE SEQUENCE [LARGE SCALE MRNA]</scope>
</reference>
<reference key="2">
    <citation type="journal article" date="2006" name="Nature">
        <title>The DNA sequence and biological annotation of human chromosome 1.</title>
        <authorList>
            <person name="Gregory S.G."/>
            <person name="Barlow K.F."/>
            <person name="McLay K.E."/>
            <person name="Kaul R."/>
            <person name="Swarbreck D."/>
            <person name="Dunham A."/>
            <person name="Scott C.E."/>
            <person name="Howe K.L."/>
            <person name="Woodfine K."/>
            <person name="Spencer C.C.A."/>
            <person name="Jones M.C."/>
            <person name="Gillson C."/>
            <person name="Searle S."/>
            <person name="Zhou Y."/>
            <person name="Kokocinski F."/>
            <person name="McDonald L."/>
            <person name="Evans R."/>
            <person name="Phillips K."/>
            <person name="Atkinson A."/>
            <person name="Cooper R."/>
            <person name="Jones C."/>
            <person name="Hall R.E."/>
            <person name="Andrews T.D."/>
            <person name="Lloyd C."/>
            <person name="Ainscough R."/>
            <person name="Almeida J.P."/>
            <person name="Ambrose K.D."/>
            <person name="Anderson F."/>
            <person name="Andrew R.W."/>
            <person name="Ashwell R.I.S."/>
            <person name="Aubin K."/>
            <person name="Babbage A.K."/>
            <person name="Bagguley C.L."/>
            <person name="Bailey J."/>
            <person name="Beasley H."/>
            <person name="Bethel G."/>
            <person name="Bird C.P."/>
            <person name="Bray-Allen S."/>
            <person name="Brown J.Y."/>
            <person name="Brown A.J."/>
            <person name="Buckley D."/>
            <person name="Burton J."/>
            <person name="Bye J."/>
            <person name="Carder C."/>
            <person name="Chapman J.C."/>
            <person name="Clark S.Y."/>
            <person name="Clarke G."/>
            <person name="Clee C."/>
            <person name="Cobley V."/>
            <person name="Collier R.E."/>
            <person name="Corby N."/>
            <person name="Coville G.J."/>
            <person name="Davies J."/>
            <person name="Deadman R."/>
            <person name="Dunn M."/>
            <person name="Earthrowl M."/>
            <person name="Ellington A.G."/>
            <person name="Errington H."/>
            <person name="Frankish A."/>
            <person name="Frankland J."/>
            <person name="French L."/>
            <person name="Garner P."/>
            <person name="Garnett J."/>
            <person name="Gay L."/>
            <person name="Ghori M.R.J."/>
            <person name="Gibson R."/>
            <person name="Gilby L.M."/>
            <person name="Gillett W."/>
            <person name="Glithero R.J."/>
            <person name="Grafham D.V."/>
            <person name="Griffiths C."/>
            <person name="Griffiths-Jones S."/>
            <person name="Grocock R."/>
            <person name="Hammond S."/>
            <person name="Harrison E.S.I."/>
            <person name="Hart E."/>
            <person name="Haugen E."/>
            <person name="Heath P.D."/>
            <person name="Holmes S."/>
            <person name="Holt K."/>
            <person name="Howden P.J."/>
            <person name="Hunt A.R."/>
            <person name="Hunt S.E."/>
            <person name="Hunter G."/>
            <person name="Isherwood J."/>
            <person name="James R."/>
            <person name="Johnson C."/>
            <person name="Johnson D."/>
            <person name="Joy A."/>
            <person name="Kay M."/>
            <person name="Kershaw J.K."/>
            <person name="Kibukawa M."/>
            <person name="Kimberley A.M."/>
            <person name="King A."/>
            <person name="Knights A.J."/>
            <person name="Lad H."/>
            <person name="Laird G."/>
            <person name="Lawlor S."/>
            <person name="Leongamornlert D.A."/>
            <person name="Lloyd D.M."/>
            <person name="Loveland J."/>
            <person name="Lovell J."/>
            <person name="Lush M.J."/>
            <person name="Lyne R."/>
            <person name="Martin S."/>
            <person name="Mashreghi-Mohammadi M."/>
            <person name="Matthews L."/>
            <person name="Matthews N.S.W."/>
            <person name="McLaren S."/>
            <person name="Milne S."/>
            <person name="Mistry S."/>
            <person name="Moore M.J.F."/>
            <person name="Nickerson T."/>
            <person name="O'Dell C.N."/>
            <person name="Oliver K."/>
            <person name="Palmeiri A."/>
            <person name="Palmer S.A."/>
            <person name="Parker A."/>
            <person name="Patel D."/>
            <person name="Pearce A.V."/>
            <person name="Peck A.I."/>
            <person name="Pelan S."/>
            <person name="Phelps K."/>
            <person name="Phillimore B.J."/>
            <person name="Plumb R."/>
            <person name="Rajan J."/>
            <person name="Raymond C."/>
            <person name="Rouse G."/>
            <person name="Saenphimmachak C."/>
            <person name="Sehra H.K."/>
            <person name="Sheridan E."/>
            <person name="Shownkeen R."/>
            <person name="Sims S."/>
            <person name="Skuce C.D."/>
            <person name="Smith M."/>
            <person name="Steward C."/>
            <person name="Subramanian S."/>
            <person name="Sycamore N."/>
            <person name="Tracey A."/>
            <person name="Tromans A."/>
            <person name="Van Helmond Z."/>
            <person name="Wall M."/>
            <person name="Wallis J.M."/>
            <person name="White S."/>
            <person name="Whitehead S.L."/>
            <person name="Wilkinson J.E."/>
            <person name="Willey D.L."/>
            <person name="Williams H."/>
            <person name="Wilming L."/>
            <person name="Wray P.W."/>
            <person name="Wu Z."/>
            <person name="Coulson A."/>
            <person name="Vaudin M."/>
            <person name="Sulston J.E."/>
            <person name="Durbin R.M."/>
            <person name="Hubbard T."/>
            <person name="Wooster R."/>
            <person name="Dunham I."/>
            <person name="Carter N.P."/>
            <person name="McVean G."/>
            <person name="Ross M.T."/>
            <person name="Harrow J."/>
            <person name="Olson M.V."/>
            <person name="Beck S."/>
            <person name="Rogers J."/>
            <person name="Bentley D.R."/>
        </authorList>
    </citation>
    <scope>NUCLEOTIDE SEQUENCE [LARGE SCALE GENOMIC DNA]</scope>
</reference>
<reference key="3">
    <citation type="journal article" date="2004" name="Genome Res.">
        <title>The status, quality, and expansion of the NIH full-length cDNA project: the Mammalian Gene Collection (MGC).</title>
        <authorList>
            <consortium name="The MGC Project Team"/>
        </authorList>
    </citation>
    <scope>NUCLEOTIDE SEQUENCE [LARGE SCALE MRNA]</scope>
    <source>
        <tissue>Placenta</tissue>
    </source>
</reference>
<reference key="4">
    <citation type="journal article" date="2007" name="BMC Genomics">
        <title>The full-ORF clone resource of the German cDNA consortium.</title>
        <authorList>
            <person name="Bechtel S."/>
            <person name="Rosenfelder H."/>
            <person name="Duda A."/>
            <person name="Schmidt C.P."/>
            <person name="Ernst U."/>
            <person name="Wellenreuther R."/>
            <person name="Mehrle A."/>
            <person name="Schuster C."/>
            <person name="Bahr A."/>
            <person name="Bloecker H."/>
            <person name="Heubner D."/>
            <person name="Hoerlein A."/>
            <person name="Michel G."/>
            <person name="Wedler H."/>
            <person name="Koehrer K."/>
            <person name="Ottenwaelder B."/>
            <person name="Poustka A."/>
            <person name="Wiemann S."/>
            <person name="Schupp I."/>
        </authorList>
    </citation>
    <scope>NUCLEOTIDE SEQUENCE [LARGE SCALE MRNA] OF 430-602</scope>
    <source>
        <tissue>Melanoma</tissue>
    </source>
</reference>
<reference key="5">
    <citation type="journal article" date="2008" name="Proc. Natl. Acad. Sci. U.S.A.">
        <title>A quantitative atlas of mitotic phosphorylation.</title>
        <authorList>
            <person name="Dephoure N."/>
            <person name="Zhou C."/>
            <person name="Villen J."/>
            <person name="Beausoleil S.A."/>
            <person name="Bakalarski C.E."/>
            <person name="Elledge S.J."/>
            <person name="Gygi S.P."/>
        </authorList>
    </citation>
    <scope>PHOSPHORYLATION [LARGE SCALE ANALYSIS] AT SER-71</scope>
    <scope>IDENTIFICATION BY MASS SPECTROMETRY [LARGE SCALE ANALYSIS]</scope>
    <source>
        <tissue>Cervix carcinoma</tissue>
    </source>
</reference>
<reference key="6">
    <citation type="journal article" date="2010" name="Sci. Signal.">
        <title>Quantitative phosphoproteomics reveals widespread full phosphorylation site occupancy during mitosis.</title>
        <authorList>
            <person name="Olsen J.V."/>
            <person name="Vermeulen M."/>
            <person name="Santamaria A."/>
            <person name="Kumar C."/>
            <person name="Miller M.L."/>
            <person name="Jensen L.J."/>
            <person name="Gnad F."/>
            <person name="Cox J."/>
            <person name="Jensen T.S."/>
            <person name="Nigg E.A."/>
            <person name="Brunak S."/>
            <person name="Mann M."/>
        </authorList>
    </citation>
    <scope>IDENTIFICATION BY MASS SPECTROMETRY [LARGE SCALE ANALYSIS]</scope>
    <source>
        <tissue>Cervix carcinoma</tissue>
    </source>
</reference>
<reference key="7">
    <citation type="journal article" date="2011" name="BMC Syst. Biol.">
        <title>Initial characterization of the human central proteome.</title>
        <authorList>
            <person name="Burkard T.R."/>
            <person name="Planyavsky M."/>
            <person name="Kaupe I."/>
            <person name="Breitwieser F.P."/>
            <person name="Buerckstuemmer T."/>
            <person name="Bennett K.L."/>
            <person name="Superti-Furga G."/>
            <person name="Colinge J."/>
        </authorList>
    </citation>
    <scope>IDENTIFICATION BY MASS SPECTROMETRY [LARGE SCALE ANALYSIS]</scope>
</reference>
<reference key="8">
    <citation type="journal article" date="2013" name="J. Proteome Res.">
        <title>Toward a comprehensive characterization of a human cancer cell phosphoproteome.</title>
        <authorList>
            <person name="Zhou H."/>
            <person name="Di Palma S."/>
            <person name="Preisinger C."/>
            <person name="Peng M."/>
            <person name="Polat A.N."/>
            <person name="Heck A.J."/>
            <person name="Mohammed S."/>
        </authorList>
    </citation>
    <scope>IDENTIFICATION BY MASS SPECTROMETRY [LARGE SCALE ANALYSIS]</scope>
    <source>
        <tissue>Erythroleukemia</tissue>
    </source>
</reference>
<proteinExistence type="evidence at protein level"/>
<gene>
    <name type="primary">LRRC40</name>
</gene>
<sequence length="602" mass="68250">MSRLKRIAGQDLRAGFKAGGRDCGTSVPQGLLKAARKSGQLNLSGRNLSEVPQCVWRINVDIPEEANQNLSFGATERWWEQTDLTKLIISNNKLQSLTDDLRLLPALTVLDIHDNQLTSLPSAIRELENLQKLNVSHNKLKILPEEITNLRNLKCLYLQHNELTCISEGFEQLSNLEDLDLSNNHLTTVPASFSSLSSLVRLNLSSNELKSLPAEINRMKRLKHLDCNSNLLETIPPELAGMESLELLYLRRNKLRFLPEFPSCSLLKELHVGENQIEMLEAEHLKHLNSILVLDLRDNKLKSVPDEIILLRSLERLDLSNNDISSLPYSLGNLHLKFLALEGNPLRTIRREIISKGTQEVLKYLRSKIKDDGPSQSESATETAMTLPSESRVNIHAIITLKILDYSDKQATLIPDEVFDAVKSNIVTSINFSKNQLCEIPKRMVELKEMVSDVDLSFNKLSFISLELCVLQKLTFLDLRNNFLNSLPEEMESLVRLQTINLSFNRFKMLPEVLYRIFTLETILISNNQVGSVDPQKMKMMENLTTLDLQNNDLLQIPPELGNCVNLRTLLLDGNPFRVPRAAILMKGTAAILEYLRDRIPT</sequence>
<evidence type="ECO:0000305" key="1"/>
<evidence type="ECO:0007744" key="2">
    <source>
    </source>
</evidence>
<organism>
    <name type="scientific">Homo sapiens</name>
    <name type="common">Human</name>
    <dbReference type="NCBI Taxonomy" id="9606"/>
    <lineage>
        <taxon>Eukaryota</taxon>
        <taxon>Metazoa</taxon>
        <taxon>Chordata</taxon>
        <taxon>Craniata</taxon>
        <taxon>Vertebrata</taxon>
        <taxon>Euteleostomi</taxon>
        <taxon>Mammalia</taxon>
        <taxon>Eutheria</taxon>
        <taxon>Euarchontoglires</taxon>
        <taxon>Primates</taxon>
        <taxon>Haplorrhini</taxon>
        <taxon>Catarrhini</taxon>
        <taxon>Hominidae</taxon>
        <taxon>Homo</taxon>
    </lineage>
</organism>
<keyword id="KW-0433">Leucine-rich repeat</keyword>
<keyword id="KW-0597">Phosphoprotein</keyword>
<keyword id="KW-1267">Proteomics identification</keyword>
<keyword id="KW-1185">Reference proteome</keyword>
<keyword id="KW-0677">Repeat</keyword>
<protein>
    <recommendedName>
        <fullName>Leucine-rich repeat-containing protein 40</fullName>
    </recommendedName>
</protein>